<proteinExistence type="inferred from homology"/>
<keyword id="KW-0687">Ribonucleoprotein</keyword>
<keyword id="KW-0689">Ribosomal protein</keyword>
<keyword id="KW-0694">RNA-binding</keyword>
<keyword id="KW-0699">rRNA-binding</keyword>
<feature type="chain" id="PRO_1000166402" description="Small ribosomal subunit protein uS15">
    <location>
        <begin position="1"/>
        <end position="89"/>
    </location>
</feature>
<dbReference type="EMBL" id="CP001095">
    <property type="protein sequence ID" value="ACJ53329.1"/>
    <property type="molecule type" value="Genomic_DNA"/>
</dbReference>
<dbReference type="EMBL" id="AP010889">
    <property type="protein sequence ID" value="BAJ69920.1"/>
    <property type="molecule type" value="Genomic_DNA"/>
</dbReference>
<dbReference type="RefSeq" id="WP_007053775.1">
    <property type="nucleotide sequence ID" value="NZ_JDTT01000031.1"/>
</dbReference>
<dbReference type="SMR" id="B7GNH3"/>
<dbReference type="KEGG" id="bln:Blon_2271"/>
<dbReference type="KEGG" id="blon:BLIJ_2343"/>
<dbReference type="PATRIC" id="fig|391904.8.peg.2346"/>
<dbReference type="HOGENOM" id="CLU_148518_0_0_11"/>
<dbReference type="Proteomes" id="UP000001360">
    <property type="component" value="Chromosome"/>
</dbReference>
<dbReference type="GO" id="GO:0022627">
    <property type="term" value="C:cytosolic small ribosomal subunit"/>
    <property type="evidence" value="ECO:0007669"/>
    <property type="project" value="TreeGrafter"/>
</dbReference>
<dbReference type="GO" id="GO:0019843">
    <property type="term" value="F:rRNA binding"/>
    <property type="evidence" value="ECO:0007669"/>
    <property type="project" value="UniProtKB-UniRule"/>
</dbReference>
<dbReference type="GO" id="GO:0003735">
    <property type="term" value="F:structural constituent of ribosome"/>
    <property type="evidence" value="ECO:0007669"/>
    <property type="project" value="InterPro"/>
</dbReference>
<dbReference type="GO" id="GO:0006412">
    <property type="term" value="P:translation"/>
    <property type="evidence" value="ECO:0007669"/>
    <property type="project" value="UniProtKB-UniRule"/>
</dbReference>
<dbReference type="CDD" id="cd00353">
    <property type="entry name" value="Ribosomal_S15p_S13e"/>
    <property type="match status" value="1"/>
</dbReference>
<dbReference type="FunFam" id="1.10.287.10:FF:000002">
    <property type="entry name" value="30S ribosomal protein S15"/>
    <property type="match status" value="1"/>
</dbReference>
<dbReference type="Gene3D" id="6.10.250.3130">
    <property type="match status" value="1"/>
</dbReference>
<dbReference type="Gene3D" id="1.10.287.10">
    <property type="entry name" value="S15/NS1, RNA-binding"/>
    <property type="match status" value="1"/>
</dbReference>
<dbReference type="HAMAP" id="MF_01343_B">
    <property type="entry name" value="Ribosomal_uS15_B"/>
    <property type="match status" value="1"/>
</dbReference>
<dbReference type="InterPro" id="IPR000589">
    <property type="entry name" value="Ribosomal_uS15"/>
</dbReference>
<dbReference type="InterPro" id="IPR005290">
    <property type="entry name" value="Ribosomal_uS15_bac-type"/>
</dbReference>
<dbReference type="InterPro" id="IPR009068">
    <property type="entry name" value="uS15_NS1_RNA-bd_sf"/>
</dbReference>
<dbReference type="NCBIfam" id="TIGR00952">
    <property type="entry name" value="S15_bact"/>
    <property type="match status" value="1"/>
</dbReference>
<dbReference type="PANTHER" id="PTHR23321">
    <property type="entry name" value="RIBOSOMAL PROTEIN S15, BACTERIAL AND ORGANELLAR"/>
    <property type="match status" value="1"/>
</dbReference>
<dbReference type="PANTHER" id="PTHR23321:SF26">
    <property type="entry name" value="SMALL RIBOSOMAL SUBUNIT PROTEIN US15M"/>
    <property type="match status" value="1"/>
</dbReference>
<dbReference type="Pfam" id="PF00312">
    <property type="entry name" value="Ribosomal_S15"/>
    <property type="match status" value="1"/>
</dbReference>
<dbReference type="SMART" id="SM01387">
    <property type="entry name" value="Ribosomal_S15"/>
    <property type="match status" value="1"/>
</dbReference>
<dbReference type="SUPFAM" id="SSF47060">
    <property type="entry name" value="S15/NS1 RNA-binding domain"/>
    <property type="match status" value="1"/>
</dbReference>
<comment type="function">
    <text evidence="1">One of the primary rRNA binding proteins, it binds directly to 16S rRNA where it helps nucleate assembly of the platform of the 30S subunit by binding and bridging several RNA helices of the 16S rRNA.</text>
</comment>
<comment type="function">
    <text evidence="1">Forms an intersubunit bridge (bridge B4) with the 23S rRNA of the 50S subunit in the ribosome.</text>
</comment>
<comment type="subunit">
    <text evidence="1">Part of the 30S ribosomal subunit. Forms a bridge to the 50S subunit in the 70S ribosome, contacting the 23S rRNA.</text>
</comment>
<comment type="similarity">
    <text evidence="1">Belongs to the universal ribosomal protein uS15 family.</text>
</comment>
<reference key="1">
    <citation type="journal article" date="2008" name="Proc. Natl. Acad. Sci. U.S.A.">
        <title>The genome sequence of Bifidobacterium longum subsp. infantis reveals adaptations for milk utilization within the infant microbiome.</title>
        <authorList>
            <person name="Sela D.A."/>
            <person name="Chapman J."/>
            <person name="Adeuya A."/>
            <person name="Kim J.H."/>
            <person name="Chen F."/>
            <person name="Whitehead T.R."/>
            <person name="Lapidus A."/>
            <person name="Rokhsar D.S."/>
            <person name="Lebrilla C.B."/>
            <person name="German J.B."/>
            <person name="Price N.P."/>
            <person name="Richardson P.M."/>
            <person name="Mills D.A."/>
        </authorList>
    </citation>
    <scope>NUCLEOTIDE SEQUENCE [LARGE SCALE GENOMIC DNA]</scope>
    <source>
        <strain>ATCC 15697 / DSM 20088 / JCM 1222 / NCTC 11817 / S12</strain>
    </source>
</reference>
<reference key="2">
    <citation type="journal article" date="2011" name="Nature">
        <title>Bifidobacteria can protect from enteropathogenic infection through production of acetate.</title>
        <authorList>
            <person name="Fukuda S."/>
            <person name="Toh H."/>
            <person name="Hase K."/>
            <person name="Oshima K."/>
            <person name="Nakanishi Y."/>
            <person name="Yoshimura K."/>
            <person name="Tobe T."/>
            <person name="Clarke J.M."/>
            <person name="Topping D.L."/>
            <person name="Suzuki T."/>
            <person name="Taylor T.D."/>
            <person name="Itoh K."/>
            <person name="Kikuchi J."/>
            <person name="Morita H."/>
            <person name="Hattori M."/>
            <person name="Ohno H."/>
        </authorList>
    </citation>
    <scope>NUCLEOTIDE SEQUENCE [LARGE SCALE GENOMIC DNA]</scope>
    <source>
        <strain>ATCC 15697 / DSM 20088 / JCM 1222 / NCTC 11817 / S12</strain>
    </source>
</reference>
<name>RS15_BIFLS</name>
<protein>
    <recommendedName>
        <fullName evidence="1">Small ribosomal subunit protein uS15</fullName>
    </recommendedName>
    <alternativeName>
        <fullName evidence="2">30S ribosomal protein S15</fullName>
    </alternativeName>
</protein>
<sequence length="89" mass="10487">MALTADEKTQIINEYATHEGDTGSPEVQVALLSKRIADLTEHLKEHKHDHHSRRGMQLMIGDRRRLLDYLKRVDINRYRSLIERLGLRR</sequence>
<organism>
    <name type="scientific">Bifidobacterium longum subsp. infantis (strain ATCC 15697 / DSM 20088 / JCM 1222 / NCTC 11817 / S12)</name>
    <dbReference type="NCBI Taxonomy" id="391904"/>
    <lineage>
        <taxon>Bacteria</taxon>
        <taxon>Bacillati</taxon>
        <taxon>Actinomycetota</taxon>
        <taxon>Actinomycetes</taxon>
        <taxon>Bifidobacteriales</taxon>
        <taxon>Bifidobacteriaceae</taxon>
        <taxon>Bifidobacterium</taxon>
    </lineage>
</organism>
<evidence type="ECO:0000255" key="1">
    <source>
        <dbReference type="HAMAP-Rule" id="MF_01343"/>
    </source>
</evidence>
<evidence type="ECO:0000305" key="2"/>
<accession>B7GNH3</accession>
<accession>E8MNQ4</accession>
<gene>
    <name evidence="1" type="primary">rpsO</name>
    <name type="ordered locus">Blon_2271</name>
    <name type="ordered locus">BLIJ_2343</name>
</gene>